<keyword id="KW-1185">Reference proteome</keyword>
<feature type="chain" id="PRO_0000168823" description="Biofilm regulator BssS">
    <location>
        <begin position="1"/>
        <end position="84"/>
    </location>
</feature>
<organism>
    <name type="scientific">Escherichia coli (strain K12)</name>
    <dbReference type="NCBI Taxonomy" id="83333"/>
    <lineage>
        <taxon>Bacteria</taxon>
        <taxon>Pseudomonadati</taxon>
        <taxon>Pseudomonadota</taxon>
        <taxon>Gammaproteobacteria</taxon>
        <taxon>Enterobacterales</taxon>
        <taxon>Enterobacteriaceae</taxon>
        <taxon>Escherichia</taxon>
    </lineage>
</organism>
<proteinExistence type="evidence at transcript level"/>
<evidence type="ECO:0000269" key="1">
    <source>
    </source>
</evidence>
<evidence type="ECO:0000269" key="2">
    <source>
    </source>
</evidence>
<sequence>MEKNNEVIQTHPLVGWDISTVDSYDALMLRLHYQTPNKSEQEGTEVGQTLWLTTDVARQFISILEAGIAKIESGDFQVNEYRRH</sequence>
<comment type="function">
    <text evidence="2">Represses biofilm formation in M9C glu and LB glu media but not in M9C and LB media. Seems to act as a global regulator of several genes involved in catabolite repression and stress response and regulation of the uptake and export of signaling pathways. Could be involved the regulation of indole as well as uptake and export of AI-2 through a cAMP-dependent pathway.</text>
</comment>
<comment type="induction">
    <text evidence="1">After 3 hrs of cold shock.</text>
</comment>
<comment type="disruption phenotype">
    <text evidence="2">Cells show increased biofilm formation when glucose is present in the medium. In a continuous-flow system with M9C medium supplemented with glucose, the biofilm had a 240-fold greater biomass, a 2800 fold-greater average thickness and a 16-fold increased surface coverage than the wild-type.</text>
</comment>
<protein>
    <recommendedName>
        <fullName>Biofilm regulator BssS</fullName>
    </recommendedName>
</protein>
<name>BSSS_ECOLI</name>
<gene>
    <name type="primary">bssS</name>
    <name type="synonym">yceP</name>
    <name type="ordered locus">b1060</name>
    <name type="ordered locus">JW5152</name>
</gene>
<reference key="1">
    <citation type="journal article" date="1996" name="DNA Res.">
        <title>A 718-kb DNA sequence of the Escherichia coli K-12 genome corresponding to the 12.7-28.0 min region on the linkage map.</title>
        <authorList>
            <person name="Oshima T."/>
            <person name="Aiba H."/>
            <person name="Baba T."/>
            <person name="Fujita K."/>
            <person name="Hayashi K."/>
            <person name="Honjo A."/>
            <person name="Ikemoto K."/>
            <person name="Inada T."/>
            <person name="Itoh T."/>
            <person name="Kajihara M."/>
            <person name="Kanai K."/>
            <person name="Kashimoto K."/>
            <person name="Kimura S."/>
            <person name="Kitagawa M."/>
            <person name="Makino K."/>
            <person name="Masuda S."/>
            <person name="Miki T."/>
            <person name="Mizobuchi K."/>
            <person name="Mori H."/>
            <person name="Motomura K."/>
            <person name="Nakamura Y."/>
            <person name="Nashimoto H."/>
            <person name="Nishio Y."/>
            <person name="Saito N."/>
            <person name="Sampei G."/>
            <person name="Seki Y."/>
            <person name="Tagami H."/>
            <person name="Takemoto K."/>
            <person name="Wada C."/>
            <person name="Yamamoto Y."/>
            <person name="Yano M."/>
            <person name="Horiuchi T."/>
        </authorList>
    </citation>
    <scope>NUCLEOTIDE SEQUENCE [LARGE SCALE GENOMIC DNA]</scope>
    <source>
        <strain>K12 / W3110 / ATCC 27325 / DSM 5911</strain>
    </source>
</reference>
<reference key="2">
    <citation type="journal article" date="1997" name="Science">
        <title>The complete genome sequence of Escherichia coli K-12.</title>
        <authorList>
            <person name="Blattner F.R."/>
            <person name="Plunkett G. III"/>
            <person name="Bloch C.A."/>
            <person name="Perna N.T."/>
            <person name="Burland V."/>
            <person name="Riley M."/>
            <person name="Collado-Vides J."/>
            <person name="Glasner J.D."/>
            <person name="Rode C.K."/>
            <person name="Mayhew G.F."/>
            <person name="Gregor J."/>
            <person name="Davis N.W."/>
            <person name="Kirkpatrick H.A."/>
            <person name="Goeden M.A."/>
            <person name="Rose D.J."/>
            <person name="Mau B."/>
            <person name="Shao Y."/>
        </authorList>
    </citation>
    <scope>NUCLEOTIDE SEQUENCE [LARGE SCALE GENOMIC DNA]</scope>
    <source>
        <strain>K12 / MG1655 / ATCC 47076</strain>
    </source>
</reference>
<reference key="3">
    <citation type="journal article" date="2006" name="Mol. Syst. Biol.">
        <title>Highly accurate genome sequences of Escherichia coli K-12 strains MG1655 and W3110.</title>
        <authorList>
            <person name="Hayashi K."/>
            <person name="Morooka N."/>
            <person name="Yamamoto Y."/>
            <person name="Fujita K."/>
            <person name="Isono K."/>
            <person name="Choi S."/>
            <person name="Ohtsubo E."/>
            <person name="Baba T."/>
            <person name="Wanner B.L."/>
            <person name="Mori H."/>
            <person name="Horiuchi T."/>
        </authorList>
    </citation>
    <scope>NUCLEOTIDE SEQUENCE [LARGE SCALE GENOMIC DNA]</scope>
    <source>
        <strain>K12 / W3110 / ATCC 27325 / DSM 5911</strain>
    </source>
</reference>
<reference key="4">
    <citation type="journal article" date="2003" name="Res. Microbiol.">
        <title>Changes in Escherichia coli transcriptome during acclimatization at low temperature.</title>
        <authorList>
            <person name="Polissi A."/>
            <person name="De Laurentis W."/>
            <person name="Zangrossi S."/>
            <person name="Briani F."/>
            <person name="Longhi V."/>
            <person name="Pesole G."/>
            <person name="Deho G."/>
        </authorList>
    </citation>
    <scope>INDUCTION BY COLD SHOCK</scope>
    <source>
        <strain>K12 / MG1655 / ATCC 47076</strain>
    </source>
</reference>
<reference key="5">
    <citation type="journal article" date="2006" name="Appl. Environ. Microbiol.">
        <title>YliH (BssR) and YceP (BssS) regulate Escherichia coli K-12 biofilm formation by influencing cell signaling.</title>
        <authorList>
            <person name="Domka J."/>
            <person name="Lee J."/>
            <person name="Wood T.K."/>
        </authorList>
    </citation>
    <scope>FUNCTION</scope>
    <scope>DISRUPTION PHENOTYPE</scope>
    <source>
        <strain>K12 / BW25113</strain>
    </source>
</reference>
<dbReference type="EMBL" id="U00096">
    <property type="protein sequence ID" value="AAC74144.1"/>
    <property type="molecule type" value="Genomic_DNA"/>
</dbReference>
<dbReference type="EMBL" id="AP009048">
    <property type="protein sequence ID" value="BAA35857.2"/>
    <property type="molecule type" value="Genomic_DNA"/>
</dbReference>
<dbReference type="PIR" id="A64849">
    <property type="entry name" value="A64849"/>
</dbReference>
<dbReference type="RefSeq" id="NP_415578.3">
    <property type="nucleotide sequence ID" value="NC_000913.3"/>
</dbReference>
<dbReference type="RefSeq" id="WP_000414438.1">
    <property type="nucleotide sequence ID" value="NZ_SSZK01000053.1"/>
</dbReference>
<dbReference type="SMR" id="P0AB33"/>
<dbReference type="BioGRID" id="4260077">
    <property type="interactions" value="201"/>
</dbReference>
<dbReference type="BioGRID" id="850464">
    <property type="interactions" value="2"/>
</dbReference>
<dbReference type="FunCoup" id="P0AB33">
    <property type="interactions" value="16"/>
</dbReference>
<dbReference type="IntAct" id="P0AB33">
    <property type="interactions" value="3"/>
</dbReference>
<dbReference type="STRING" id="511145.b1060"/>
<dbReference type="PaxDb" id="511145-b1060"/>
<dbReference type="EnsemblBacteria" id="AAC74144">
    <property type="protein sequence ID" value="AAC74144"/>
    <property type="gene ID" value="b1060"/>
</dbReference>
<dbReference type="GeneID" id="93776347"/>
<dbReference type="GeneID" id="946104"/>
<dbReference type="KEGG" id="ecj:JW5152"/>
<dbReference type="KEGG" id="eco:b1060"/>
<dbReference type="KEGG" id="ecoc:C3026_06445"/>
<dbReference type="PATRIC" id="fig|1411691.4.peg.1208"/>
<dbReference type="EchoBASE" id="EB4081"/>
<dbReference type="eggNOG" id="ENOG5032S2R">
    <property type="taxonomic scope" value="Bacteria"/>
</dbReference>
<dbReference type="HOGENOM" id="CLU_193121_0_0_6"/>
<dbReference type="InParanoid" id="P0AB33"/>
<dbReference type="OMA" id="HYQTPNQ"/>
<dbReference type="OrthoDB" id="6445176at2"/>
<dbReference type="PhylomeDB" id="P0AB33"/>
<dbReference type="BioCyc" id="EcoCyc:G6557-MONOMER"/>
<dbReference type="PRO" id="PR:P0AB33"/>
<dbReference type="Proteomes" id="UP000000625">
    <property type="component" value="Chromosome"/>
</dbReference>
<dbReference type="GO" id="GO:1900190">
    <property type="term" value="P:regulation of single-species biofilm formation"/>
    <property type="evidence" value="ECO:0000315"/>
    <property type="project" value="EcoCyc"/>
</dbReference>
<dbReference type="GO" id="GO:0090609">
    <property type="term" value="P:single-species submerged biofilm formation"/>
    <property type="evidence" value="ECO:0000315"/>
    <property type="project" value="CACAO"/>
</dbReference>
<dbReference type="InterPro" id="IPR025730">
    <property type="entry name" value="Biofilm_BssS"/>
</dbReference>
<dbReference type="NCBIfam" id="NF008958">
    <property type="entry name" value="PRK12301.1"/>
    <property type="match status" value="1"/>
</dbReference>
<dbReference type="Pfam" id="PF13991">
    <property type="entry name" value="BssS"/>
    <property type="match status" value="1"/>
</dbReference>
<accession>P0AB33</accession>
<accession>P75927</accession>
<accession>Q9R374</accession>